<reference key="1">
    <citation type="journal article" date="1998" name="Science">
        <title>Genome sequence of the nematode C. elegans: a platform for investigating biology.</title>
        <authorList>
            <consortium name="The C. elegans sequencing consortium"/>
        </authorList>
    </citation>
    <scope>NUCLEOTIDE SEQUENCE [LARGE SCALE GENOMIC DNA]</scope>
    <source>
        <strain>Bristol N2</strain>
    </source>
</reference>
<keyword id="KW-0325">Glycoprotein</keyword>
<keyword id="KW-0472">Membrane</keyword>
<keyword id="KW-1185">Reference proteome</keyword>
<keyword id="KW-0812">Transmembrane</keyword>
<keyword id="KW-1133">Transmembrane helix</keyword>
<keyword id="KW-0813">Transport</keyword>
<gene>
    <name evidence="4" type="ORF">B0285.6</name>
</gene>
<organism>
    <name type="scientific">Caenorhabditis elegans</name>
    <dbReference type="NCBI Taxonomy" id="6239"/>
    <lineage>
        <taxon>Eukaryota</taxon>
        <taxon>Metazoa</taxon>
        <taxon>Ecdysozoa</taxon>
        <taxon>Nematoda</taxon>
        <taxon>Chromadorea</taxon>
        <taxon>Rhabditida</taxon>
        <taxon>Rhabditina</taxon>
        <taxon>Rhabditomorpha</taxon>
        <taxon>Rhabditoidea</taxon>
        <taxon>Rhabditidae</taxon>
        <taxon>Peloderinae</taxon>
        <taxon>Caenorhabditis</taxon>
    </lineage>
</organism>
<comment type="subcellular location">
    <subcellularLocation>
        <location evidence="1">Membrane</location>
        <topology evidence="1">Multi-pass membrane protein</topology>
    </subcellularLocation>
</comment>
<comment type="similarity">
    <text evidence="3">Belongs to the SLC13A/DASS transporter (TC 2.A.47) family. NADC subfamily.</text>
</comment>
<evidence type="ECO:0000255" key="1"/>
<evidence type="ECO:0000255" key="2">
    <source>
        <dbReference type="PROSITE-ProRule" id="PRU00498"/>
    </source>
</evidence>
<evidence type="ECO:0000305" key="3"/>
<evidence type="ECO:0000312" key="4">
    <source>
        <dbReference type="WormBase" id="B0285.6"/>
    </source>
</evidence>
<protein>
    <recommendedName>
        <fullName>Uncharacterized transporter B0285.6</fullName>
    </recommendedName>
</protein>
<name>YKG6_CAEEL</name>
<dbReference type="EMBL" id="BX284603">
    <property type="protein sequence ID" value="CAA84299.3"/>
    <property type="molecule type" value="Genomic_DNA"/>
</dbReference>
<dbReference type="PIR" id="T18694">
    <property type="entry name" value="T18694"/>
</dbReference>
<dbReference type="RefSeq" id="NP_001366690.1">
    <property type="nucleotide sequence ID" value="NM_001381838.2"/>
</dbReference>
<dbReference type="RefSeq" id="NP_497877.1">
    <property type="nucleotide sequence ID" value="NM_065476.4"/>
</dbReference>
<dbReference type="SMR" id="P46556"/>
<dbReference type="FunCoup" id="P46556">
    <property type="interactions" value="69"/>
</dbReference>
<dbReference type="STRING" id="6239.B0285.6.1"/>
<dbReference type="PaxDb" id="6239-B0285.6"/>
<dbReference type="EnsemblMetazoa" id="B0285.6.1">
    <property type="protein sequence ID" value="B0285.6.1"/>
    <property type="gene ID" value="WBGene00007138"/>
</dbReference>
<dbReference type="GeneID" id="175563"/>
<dbReference type="UCSC" id="B0285.6">
    <property type="organism name" value="c. elegans"/>
</dbReference>
<dbReference type="AGR" id="WB:WBGene00007138"/>
<dbReference type="WormBase" id="B0285.6">
    <property type="protein sequence ID" value="CE54152"/>
    <property type="gene ID" value="WBGene00007138"/>
</dbReference>
<dbReference type="eggNOG" id="KOG1281">
    <property type="taxonomic scope" value="Eukaryota"/>
</dbReference>
<dbReference type="GeneTree" id="ENSGT01030000234550"/>
<dbReference type="HOGENOM" id="CLU_005170_9_2_1"/>
<dbReference type="InParanoid" id="P46556"/>
<dbReference type="OrthoDB" id="6493944at2759"/>
<dbReference type="PhylomeDB" id="P46556"/>
<dbReference type="Reactome" id="R-CEL-433137">
    <property type="pathway name" value="Sodium-coupled sulphate, di- and tri-carboxylate transporters"/>
</dbReference>
<dbReference type="PRO" id="PR:P46556"/>
<dbReference type="Proteomes" id="UP000001940">
    <property type="component" value="Chromosome III"/>
</dbReference>
<dbReference type="Bgee" id="WBGene00007138">
    <property type="expression patterns" value="Expressed in larva and 1 other cell type or tissue"/>
</dbReference>
<dbReference type="GO" id="GO:0005886">
    <property type="term" value="C:plasma membrane"/>
    <property type="evidence" value="ECO:0000318"/>
    <property type="project" value="GO_Central"/>
</dbReference>
<dbReference type="GO" id="GO:0015137">
    <property type="term" value="F:citrate transmembrane transporter activity"/>
    <property type="evidence" value="ECO:0000318"/>
    <property type="project" value="GO_Central"/>
</dbReference>
<dbReference type="GO" id="GO:0015141">
    <property type="term" value="F:succinate transmembrane transporter activity"/>
    <property type="evidence" value="ECO:0000318"/>
    <property type="project" value="GO_Central"/>
</dbReference>
<dbReference type="GO" id="GO:0015746">
    <property type="term" value="P:citrate transport"/>
    <property type="evidence" value="ECO:0000318"/>
    <property type="project" value="GO_Central"/>
</dbReference>
<dbReference type="GO" id="GO:0015744">
    <property type="term" value="P:succinate transport"/>
    <property type="evidence" value="ECO:0000318"/>
    <property type="project" value="GO_Central"/>
</dbReference>
<dbReference type="GO" id="GO:0055085">
    <property type="term" value="P:transmembrane transport"/>
    <property type="evidence" value="ECO:0000318"/>
    <property type="project" value="GO_Central"/>
</dbReference>
<dbReference type="InterPro" id="IPR031312">
    <property type="entry name" value="Na/sul_symport_CS"/>
</dbReference>
<dbReference type="InterPro" id="IPR001898">
    <property type="entry name" value="SLC13A/DASS"/>
</dbReference>
<dbReference type="PANTHER" id="PTHR10283:SF77">
    <property type="entry name" value="PROTEIN CBG18085"/>
    <property type="match status" value="1"/>
</dbReference>
<dbReference type="PANTHER" id="PTHR10283">
    <property type="entry name" value="SOLUTE CARRIER FAMILY 13 MEMBER"/>
    <property type="match status" value="1"/>
</dbReference>
<dbReference type="Pfam" id="PF00939">
    <property type="entry name" value="Na_sulph_symp"/>
    <property type="match status" value="1"/>
</dbReference>
<dbReference type="PROSITE" id="PS01271">
    <property type="entry name" value="NA_SULFATE"/>
    <property type="match status" value="1"/>
</dbReference>
<feature type="chain" id="PRO_0000172501" description="Uncharacterized transporter B0285.6">
    <location>
        <begin position="1"/>
        <end position="574"/>
    </location>
</feature>
<feature type="transmembrane region" description="Helical" evidence="1">
    <location>
        <begin position="14"/>
        <end position="34"/>
    </location>
</feature>
<feature type="transmembrane region" description="Helical" evidence="1">
    <location>
        <begin position="54"/>
        <end position="74"/>
    </location>
</feature>
<feature type="transmembrane region" description="Helical" evidence="1">
    <location>
        <begin position="124"/>
        <end position="144"/>
    </location>
</feature>
<feature type="transmembrane region" description="Helical" evidence="1">
    <location>
        <begin position="205"/>
        <end position="225"/>
    </location>
</feature>
<feature type="transmembrane region" description="Helical" evidence="1">
    <location>
        <begin position="253"/>
        <end position="273"/>
    </location>
</feature>
<feature type="transmembrane region" description="Helical" evidence="1">
    <location>
        <begin position="323"/>
        <end position="343"/>
    </location>
</feature>
<feature type="transmembrane region" description="Helical" evidence="1">
    <location>
        <begin position="350"/>
        <end position="370"/>
    </location>
</feature>
<feature type="transmembrane region" description="Helical" evidence="1">
    <location>
        <begin position="403"/>
        <end position="423"/>
    </location>
</feature>
<feature type="transmembrane region" description="Helical" evidence="1">
    <location>
        <begin position="441"/>
        <end position="461"/>
    </location>
</feature>
<feature type="transmembrane region" description="Helical" evidence="1">
    <location>
        <begin position="485"/>
        <end position="505"/>
    </location>
</feature>
<feature type="transmembrane region" description="Helical" evidence="1">
    <location>
        <begin position="520"/>
        <end position="540"/>
    </location>
</feature>
<feature type="glycosylation site" description="N-linked (GlcNAc...) asparagine" evidence="2">
    <location>
        <position position="565"/>
    </location>
</feature>
<feature type="glycosylation site" description="N-linked (GlcNAc...) asparagine" evidence="2">
    <location>
        <position position="569"/>
    </location>
</feature>
<accession>P46556</accession>
<proteinExistence type="inferred from homology"/>
<sequence length="574" mass="64980">MGRRHGWADEFRTFFPTLWLILAPLILSPLLFFGQEGKCAFVILTMSCYWVAEVVPLAVTSFIPMIALPFLGIVSIKEVAPKYFADTNIVFFNSLMLSLAVEECQLHKRIALKMLTYVGTRPHWLMAGFMIITSFISLWISDTACCALMAPIAYALLEEIMIPKMRPEEKENEIEVMKIFDKEDPEEKEKKKLDTSRLSVRDRGICKCMMLLVAHASLIGGTGTINSTGPNLIFRDNIEKNFPNEDHGISYLSWMAFAIPPMIFYMFSSWFIVQLQFLGPRHLMGMFREPTETEKQEEEVAKRAVWKSYDQLGPMTWAEKSTLVIFVLAVLSWVSSDPKVIPGWSDLFRKGYVTDSCSGLVAVFLLFIWPKKKPDFRIFRKDKSRPSVRQEPLIDWDCVRRRFPWSIILLLGAGFAISDAVRVSGLSSLIACSLNSTISKMPFFVMQIILSIVVVVMTEFSTNSATASIFIPISFKMAEAVGAHPLYFSIPTAIGPSFSFMLPMATPANAIVYETKTIRMIDMVSCGVFLNIFCIAITAINMNTWAFWLFNMGTYPDYALRHATNMTGNSSQCF</sequence>